<evidence type="ECO:0000250" key="1">
    <source>
        <dbReference type="UniProtKB" id="P01210"/>
    </source>
</evidence>
<evidence type="ECO:0000250" key="2">
    <source>
        <dbReference type="UniProtKB" id="P01211"/>
    </source>
</evidence>
<evidence type="ECO:0000250" key="3">
    <source>
        <dbReference type="UniProtKB" id="P04094"/>
    </source>
</evidence>
<evidence type="ECO:0000250" key="4">
    <source>
        <dbReference type="UniProtKB" id="P22005"/>
    </source>
</evidence>
<evidence type="ECO:0000255" key="5"/>
<evidence type="ECO:0000256" key="6">
    <source>
        <dbReference type="SAM" id="MobiDB-lite"/>
    </source>
</evidence>
<evidence type="ECO:0000269" key="7">
    <source>
    </source>
</evidence>
<evidence type="ECO:0000305" key="8"/>
<sequence length="268" mass="30436">MARLLRLCTWLVALGPGLLATVQAECSQDCAACSYRLVRPGDLNFLACTLECEGQLPSLKIWETCKDLLQVSKQELPQEGASSLRESGKQDESHLLSKKYGGFMKRYGGFMKKVDELYPVEPEEEANGGEILTKRYGGFMKKDAEDGDALANSSDLLKELLGTGDDRDRENHHQEGGDSDEGVSKRYGGFMRGLKRSPQVEDEAKELQKRYGGFMRRVGRPEWWMDYQKRYGGFLKRFAEFLPSDEEGESYSKEVPEMEKRYGGFMRF</sequence>
<name>PENK_CAVPO</name>
<reference key="1">
    <citation type="journal article" date="1995" name="Mol. Cell. Biol.">
        <title>Structure and expression of the guinea pig preproenkephalin gene: site-specific Cleavage in the 3' untranslated region yields truncated mRNA transcripts in specific brain regions.</title>
        <authorList>
            <person name="Laforge K.S."/>
            <person name="Unterwald E.M."/>
            <person name="Kreek M.J."/>
        </authorList>
    </citation>
    <scope>NUCLEOTIDE SEQUENCE [GENOMIC DNA]</scope>
    <source>
        <strain>Hartley</strain>
    </source>
</reference>
<reference key="2">
    <citation type="journal article" date="1981" name="Proc. Natl. Acad. Sci. U.S.A.">
        <title>A highly potent 3200-dalton adrenal opioid peptide that contains both a [Met]- and [Leu]enkephalin sequence.</title>
        <authorList>
            <person name="Kilpatrick D.L."/>
            <person name="Taniguchi T."/>
            <person name="Jones B.N."/>
            <person name="Stern A.S."/>
            <person name="Shively J.E."/>
            <person name="Hullihan J."/>
            <person name="Kimura S."/>
            <person name="Stein S."/>
            <person name="Udenfriend S."/>
        </authorList>
    </citation>
    <scope>PROTEIN SEQUENCE OF 211-235</scope>
    <scope>POSSIBLE BIOLOGICAL FUNCTION</scope>
</reference>
<feature type="signal peptide" evidence="5">
    <location>
        <begin position="1"/>
        <end position="24"/>
    </location>
</feature>
<feature type="peptide" id="PRO_0000008219" description="Synenkephalin">
    <location>
        <begin position="25"/>
        <end position="97"/>
    </location>
</feature>
<feature type="peptide" id="PRO_0000008220" description="Met-enkephalin">
    <location>
        <begin position="100"/>
        <end position="104"/>
    </location>
</feature>
<feature type="peptide" id="PRO_0000008221" description="Met-enkephalin">
    <location>
        <begin position="107"/>
        <end position="111"/>
    </location>
</feature>
<feature type="peptide" id="PRO_0000377685" description="PENK(114-133)" evidence="3">
    <location>
        <begin position="114"/>
        <end position="133"/>
    </location>
</feature>
<feature type="peptide" id="PRO_0000008223" description="Met-enkephalin">
    <location>
        <begin position="136"/>
        <end position="140"/>
    </location>
</feature>
<feature type="peptide" id="PRO_0000377686" description="PENK(143-184)" evidence="3">
    <location>
        <begin position="143"/>
        <end position="184"/>
    </location>
</feature>
<feature type="peptide" id="PRO_0000008225" description="Met-enkephalin-Arg-Gly-Leu">
    <location>
        <begin position="187"/>
        <end position="194"/>
    </location>
</feature>
<feature type="propeptide" id="PRO_0000008226">
    <location>
        <begin position="197"/>
        <end position="208"/>
    </location>
</feature>
<feature type="peptide" id="PRO_0000008227" description="Met-enkephalin" evidence="7">
    <location>
        <begin position="211"/>
        <end position="215"/>
    </location>
</feature>
<feature type="propeptide" id="PRO_0000008228">
    <location>
        <begin position="218"/>
        <end position="228"/>
    </location>
</feature>
<feature type="peptide" id="PRO_0000008229" description="Leu-enkephalin">
    <location>
        <begin position="231"/>
        <end position="235"/>
    </location>
</feature>
<feature type="peptide" id="PRO_0000377687" description="PENK(238-259)" evidence="3">
    <location>
        <begin position="238"/>
        <end position="259"/>
    </location>
</feature>
<feature type="peptide" id="PRO_0000008231" description="Met-enkephalin-Arg-Phe">
    <location>
        <begin position="262"/>
        <end position="268"/>
    </location>
</feature>
<feature type="region of interest" description="Disordered" evidence="6">
    <location>
        <begin position="163"/>
        <end position="184"/>
    </location>
</feature>
<feature type="compositionally biased region" description="Basic and acidic residues" evidence="6">
    <location>
        <begin position="164"/>
        <end position="176"/>
    </location>
</feature>
<feature type="site" description="Cleavage; by CTSL" evidence="2">
    <location>
        <begin position="111"/>
        <end position="112"/>
    </location>
</feature>
<feature type="site" description="Cleavage; by CTSL" evidence="2">
    <location>
        <begin position="112"/>
        <end position="113"/>
    </location>
</feature>
<feature type="site" description="Cleavage; by CTSL" evidence="2">
    <location>
        <begin position="133"/>
        <end position="134"/>
    </location>
</feature>
<feature type="site" description="Cleavage; by CTSL" evidence="2">
    <location>
        <begin position="215"/>
        <end position="216"/>
    </location>
</feature>
<feature type="site" description="Cleavage; by CTSL" evidence="2">
    <location>
        <begin position="216"/>
        <end position="217"/>
    </location>
</feature>
<feature type="site" description="Cleavage; by CTSL" evidence="2">
    <location>
        <begin position="219"/>
        <end position="220"/>
    </location>
</feature>
<feature type="modified residue" description="Phosphoserine" evidence="3">
    <location>
        <position position="252"/>
    </location>
</feature>
<feature type="disulfide bond" evidence="1">
    <location>
        <begin position="26"/>
        <end position="48"/>
    </location>
</feature>
<feature type="disulfide bond" evidence="1">
    <location>
        <begin position="30"/>
        <end position="52"/>
    </location>
</feature>
<feature type="disulfide bond" evidence="1">
    <location>
        <begin position="33"/>
        <end position="65"/>
    </location>
</feature>
<comment type="function">
    <molecule>Met-enkephalin</molecule>
    <text evidence="1">Neuropeptide that competes with and mimic the effects of opiate drugs. They play a role in a number of physiologic functions, including pain perception and responses to stress.</text>
</comment>
<comment type="function">
    <molecule>Leu-enkephalin</molecule>
    <text evidence="1">Neuropeptide that competes with and mimic the effects of opiate drugs. They play a role in a number of physiologic functions, including pain perception and responses to stress.</text>
</comment>
<comment type="function">
    <molecule>Met-enkephalin-Arg-Phe</molecule>
    <text evidence="4">Met-enkephalin-Arg-Phe neuropeptide acts as a strong ligand of Mu-type opioid receptor OPRM1. Met-enkephalin-Arg-Phe-binding to OPRM1 in the nucleus accumbens of the brain increases activation of OPRM1, leading to long-term synaptic depression of glutamate release.</text>
</comment>
<comment type="function">
    <molecule>PENK(114-133)</molecule>
    <text evidence="3">Increases glutamate release in the striatum and decreases GABA concentration in the striatum.</text>
</comment>
<comment type="function">
    <molecule>PENK(238-259)</molecule>
    <text evidence="3">Increases glutamate release in the striatum.</text>
</comment>
<comment type="subcellular location">
    <subcellularLocation>
        <location evidence="2">Cytoplasmic vesicle</location>
        <location evidence="2">Secretory vesicle</location>
        <location evidence="2">Chromaffin granule lumen</location>
    </subcellularLocation>
    <subcellularLocation>
        <location evidence="2">Secreted</location>
    </subcellularLocation>
</comment>
<comment type="PTM">
    <text evidence="2">Proenkephalin-A is cleaved by CTSL to generate Met-enkephalin.</text>
</comment>
<comment type="PTM">
    <molecule>Met-enkephalin</molecule>
    <text evidence="1">Processed and degraded by ACE.</text>
</comment>
<comment type="PTM">
    <molecule>Leu-enkephalin</molecule>
    <text evidence="1">Processed and degraded by ACE.</text>
</comment>
<comment type="PTM">
    <molecule>Met-enkephalin-Arg-Gly-Leu</molecule>
    <text evidence="1">Probably cleaved by ACE.</text>
</comment>
<comment type="PTM">
    <molecule>Met-enkephalin-Arg-Phe</molecule>
    <text evidence="3">Processed by ACE to generate Met-enkephalin in the nucleus accumbens of the brain.</text>
</comment>
<comment type="PTM">
    <text evidence="1">The N-terminal domain contains 6 conserved cysteines thought to be involved in disulfide bonding and/or processing.</text>
</comment>
<comment type="similarity">
    <text evidence="8">Belongs to the opioid neuropeptide precursor family.</text>
</comment>
<dbReference type="EMBL" id="U16138">
    <property type="protein sequence ID" value="AAA87900.1"/>
    <property type="molecule type" value="Genomic_DNA"/>
</dbReference>
<dbReference type="PIR" id="A18864">
    <property type="entry name" value="A18864"/>
</dbReference>
<dbReference type="RefSeq" id="NP_001166888.1">
    <property type="nucleotide sequence ID" value="NM_001173417.1"/>
</dbReference>
<dbReference type="FunCoup" id="P47969">
    <property type="interactions" value="426"/>
</dbReference>
<dbReference type="STRING" id="10141.ENSCPOP00000027030"/>
<dbReference type="GeneID" id="100379621"/>
<dbReference type="KEGG" id="cpoc:100379621"/>
<dbReference type="CTD" id="5179"/>
<dbReference type="eggNOG" id="ENOG502QWWK">
    <property type="taxonomic scope" value="Eukaryota"/>
</dbReference>
<dbReference type="InParanoid" id="P47969"/>
<dbReference type="OrthoDB" id="9928775at2759"/>
<dbReference type="Proteomes" id="UP000005447">
    <property type="component" value="Unassembled WGS sequence"/>
</dbReference>
<dbReference type="GO" id="GO:0043679">
    <property type="term" value="C:axon terminus"/>
    <property type="evidence" value="ECO:0007669"/>
    <property type="project" value="TreeGrafter"/>
</dbReference>
<dbReference type="GO" id="GO:0034466">
    <property type="term" value="C:chromaffin granule lumen"/>
    <property type="evidence" value="ECO:0007669"/>
    <property type="project" value="UniProtKB-SubCell"/>
</dbReference>
<dbReference type="GO" id="GO:0030425">
    <property type="term" value="C:dendrite"/>
    <property type="evidence" value="ECO:0007669"/>
    <property type="project" value="TreeGrafter"/>
</dbReference>
<dbReference type="GO" id="GO:0005576">
    <property type="term" value="C:extracellular region"/>
    <property type="evidence" value="ECO:0007669"/>
    <property type="project" value="UniProtKB-SubCell"/>
</dbReference>
<dbReference type="GO" id="GO:0043025">
    <property type="term" value="C:neuronal cell body"/>
    <property type="evidence" value="ECO:0007669"/>
    <property type="project" value="TreeGrafter"/>
</dbReference>
<dbReference type="GO" id="GO:0005886">
    <property type="term" value="C:plasma membrane"/>
    <property type="evidence" value="ECO:0007669"/>
    <property type="project" value="TreeGrafter"/>
</dbReference>
<dbReference type="GO" id="GO:0001515">
    <property type="term" value="F:opioid peptide activity"/>
    <property type="evidence" value="ECO:0007669"/>
    <property type="project" value="UniProtKB-KW"/>
</dbReference>
<dbReference type="GO" id="GO:0031628">
    <property type="term" value="F:opioid receptor binding"/>
    <property type="evidence" value="ECO:0007669"/>
    <property type="project" value="TreeGrafter"/>
</dbReference>
<dbReference type="GO" id="GO:0007268">
    <property type="term" value="P:chemical synaptic transmission"/>
    <property type="evidence" value="ECO:0007669"/>
    <property type="project" value="TreeGrafter"/>
</dbReference>
<dbReference type="GO" id="GO:0007218">
    <property type="term" value="P:neuropeptide signaling pathway"/>
    <property type="evidence" value="ECO:0007669"/>
    <property type="project" value="UniProtKB-KW"/>
</dbReference>
<dbReference type="GO" id="GO:0007600">
    <property type="term" value="P:sensory perception"/>
    <property type="evidence" value="ECO:0007669"/>
    <property type="project" value="TreeGrafter"/>
</dbReference>
<dbReference type="InterPro" id="IPR006024">
    <property type="entry name" value="Opioid_neupept"/>
</dbReference>
<dbReference type="InterPro" id="IPR000703">
    <property type="entry name" value="Proenkphlin_A"/>
</dbReference>
<dbReference type="PANTHER" id="PTHR11438">
    <property type="entry name" value="PROENKEPHALIN"/>
    <property type="match status" value="1"/>
</dbReference>
<dbReference type="PANTHER" id="PTHR11438:SF3">
    <property type="entry name" value="PROENKEPHALIN-A"/>
    <property type="match status" value="1"/>
</dbReference>
<dbReference type="Pfam" id="PF01160">
    <property type="entry name" value="Opiods_neuropep"/>
    <property type="match status" value="1"/>
</dbReference>
<dbReference type="PRINTS" id="PR01028">
    <property type="entry name" value="OPIOIDPRCRSR"/>
</dbReference>
<dbReference type="PRINTS" id="PR01029">
    <property type="entry name" value="PENKAPRCRSR"/>
</dbReference>
<dbReference type="PROSITE" id="PS01252">
    <property type="entry name" value="OPIOIDS_PRECURSOR"/>
    <property type="match status" value="1"/>
</dbReference>
<accession>P47969</accession>
<organism>
    <name type="scientific">Cavia porcellus</name>
    <name type="common">Guinea pig</name>
    <dbReference type="NCBI Taxonomy" id="10141"/>
    <lineage>
        <taxon>Eukaryota</taxon>
        <taxon>Metazoa</taxon>
        <taxon>Chordata</taxon>
        <taxon>Craniata</taxon>
        <taxon>Vertebrata</taxon>
        <taxon>Euteleostomi</taxon>
        <taxon>Mammalia</taxon>
        <taxon>Eutheria</taxon>
        <taxon>Euarchontoglires</taxon>
        <taxon>Glires</taxon>
        <taxon>Rodentia</taxon>
        <taxon>Hystricomorpha</taxon>
        <taxon>Caviidae</taxon>
        <taxon>Cavia</taxon>
    </lineage>
</organism>
<proteinExistence type="evidence at protein level"/>
<gene>
    <name type="primary">PENK</name>
</gene>
<keyword id="KW-0165">Cleavage on pair of basic residues</keyword>
<keyword id="KW-0968">Cytoplasmic vesicle</keyword>
<keyword id="KW-0903">Direct protein sequencing</keyword>
<keyword id="KW-1015">Disulfide bond</keyword>
<keyword id="KW-0257">Endorphin</keyword>
<keyword id="KW-0527">Neuropeptide</keyword>
<keyword id="KW-0555">Opioid peptide</keyword>
<keyword id="KW-0597">Phosphoprotein</keyword>
<keyword id="KW-1185">Reference proteome</keyword>
<keyword id="KW-0964">Secreted</keyword>
<keyword id="KW-0732">Signal</keyword>
<protein>
    <recommendedName>
        <fullName>Proenkephalin-A</fullName>
    </recommendedName>
    <component>
        <recommendedName>
            <fullName>Synenkephalin</fullName>
        </recommendedName>
    </component>
    <component>
        <recommendedName>
            <fullName>Met-enkephalin</fullName>
        </recommendedName>
        <alternativeName>
            <fullName>Opioid growth factor</fullName>
            <shortName>OGF</shortName>
        </alternativeName>
    </component>
    <component>
        <recommendedName>
            <fullName evidence="3">PENK(114-133)</fullName>
        </recommendedName>
    </component>
    <component>
        <recommendedName>
            <fullName evidence="3">PENK(143-184)</fullName>
        </recommendedName>
    </component>
    <component>
        <recommendedName>
            <fullName>Met-enkephalin-Arg-Gly-Leu</fullName>
        </recommendedName>
    </component>
    <component>
        <recommendedName>
            <fullName>Leu-enkephalin</fullName>
        </recommendedName>
    </component>
    <component>
        <recommendedName>
            <fullName evidence="3">PENK(238-259)</fullName>
        </recommendedName>
    </component>
    <component>
        <recommendedName>
            <fullName>Met-enkephalin-Arg-Phe</fullName>
        </recommendedName>
    </component>
</protein>